<reference key="1">
    <citation type="journal article" date="1998" name="Proc. Natl. Acad. Sci. U.S.A.">
        <title>Human alpha-endosulfine, a possible regulator of sulfonylurea-sensitive K(ATP) channel: molecular cloning, expression and biological properties.</title>
        <authorList>
            <person name="Heron L."/>
            <person name="Virsolvy A."/>
            <person name="Peyrollier K."/>
            <person name="Gribble F.M."/>
            <person name="Le Cam A."/>
            <person name="Ashcroft F.M."/>
            <person name="Bataille D."/>
        </authorList>
    </citation>
    <scope>NUCLEOTIDE SEQUENCE [MRNA] (ISOFORM ARPP-19)</scope>
    <source>
        <tissue>Brain</tissue>
    </source>
</reference>
<reference key="2">
    <citation type="journal article" date="2000" name="J. Biomed. Sci.">
        <title>Identification of okadaic-acid-induced genes by mRNA differential display in glioma cells.</title>
        <authorList>
            <person name="Chin L.S."/>
            <person name="Singh S.K."/>
            <person name="Wang Q."/>
            <person name="Murray S.F."/>
        </authorList>
    </citation>
    <scope>NUCLEOTIDE SEQUENCE [MRNA] (ISOFORM ARPP-19)</scope>
    <source>
        <tissue>Brain</tissue>
    </source>
</reference>
<reference key="3">
    <citation type="journal article" date="1994" name="J. Neurosci.">
        <title>Expression of mRNAs encoding ARPP-16/19, ARPP-21, and DARPP-32 in human brain tissue.</title>
        <authorList>
            <person name="Brene S."/>
            <person name="Lindefors N."/>
            <person name="Ehrlich M."/>
            <person name="Taubes T."/>
            <person name="Horiuchi A."/>
            <person name="Kopp J."/>
            <person name="Hall H."/>
            <person name="Sedvall G."/>
            <person name="Greengard P."/>
            <person name="Persson H."/>
        </authorList>
    </citation>
    <scope>NUCLEOTIDE SEQUENCE [MRNA] (ISOFORM ARPP-16)</scope>
    <source>
        <tissue>Brain</tissue>
    </source>
</reference>
<reference key="4">
    <citation type="submission" date="2004-06" db="EMBL/GenBank/DDBJ databases">
        <title>Cloning of human full open reading frames in Gateway(TM) system entry vector (pDONR201).</title>
        <authorList>
            <person name="Ebert L."/>
            <person name="Schick M."/>
            <person name="Neubert P."/>
            <person name="Schatten R."/>
            <person name="Henze S."/>
            <person name="Korn B."/>
        </authorList>
    </citation>
    <scope>NUCLEOTIDE SEQUENCE [LARGE SCALE MRNA] (ISOFORM ARPP-19)</scope>
</reference>
<reference key="5">
    <citation type="journal article" date="2004" name="Nat. Genet.">
        <title>Complete sequencing and characterization of 21,243 full-length human cDNAs.</title>
        <authorList>
            <person name="Ota T."/>
            <person name="Suzuki Y."/>
            <person name="Nishikawa T."/>
            <person name="Otsuki T."/>
            <person name="Sugiyama T."/>
            <person name="Irie R."/>
            <person name="Wakamatsu A."/>
            <person name="Hayashi K."/>
            <person name="Sato H."/>
            <person name="Nagai K."/>
            <person name="Kimura K."/>
            <person name="Makita H."/>
            <person name="Sekine M."/>
            <person name="Obayashi M."/>
            <person name="Nishi T."/>
            <person name="Shibahara T."/>
            <person name="Tanaka T."/>
            <person name="Ishii S."/>
            <person name="Yamamoto J."/>
            <person name="Saito K."/>
            <person name="Kawai Y."/>
            <person name="Isono Y."/>
            <person name="Nakamura Y."/>
            <person name="Nagahari K."/>
            <person name="Murakami K."/>
            <person name="Yasuda T."/>
            <person name="Iwayanagi T."/>
            <person name="Wagatsuma M."/>
            <person name="Shiratori A."/>
            <person name="Sudo H."/>
            <person name="Hosoiri T."/>
            <person name="Kaku Y."/>
            <person name="Kodaira H."/>
            <person name="Kondo H."/>
            <person name="Sugawara M."/>
            <person name="Takahashi M."/>
            <person name="Kanda K."/>
            <person name="Yokoi T."/>
            <person name="Furuya T."/>
            <person name="Kikkawa E."/>
            <person name="Omura Y."/>
            <person name="Abe K."/>
            <person name="Kamihara K."/>
            <person name="Katsuta N."/>
            <person name="Sato K."/>
            <person name="Tanikawa M."/>
            <person name="Yamazaki M."/>
            <person name="Ninomiya K."/>
            <person name="Ishibashi T."/>
            <person name="Yamashita H."/>
            <person name="Murakawa K."/>
            <person name="Fujimori K."/>
            <person name="Tanai H."/>
            <person name="Kimata M."/>
            <person name="Watanabe M."/>
            <person name="Hiraoka S."/>
            <person name="Chiba Y."/>
            <person name="Ishida S."/>
            <person name="Ono Y."/>
            <person name="Takiguchi S."/>
            <person name="Watanabe S."/>
            <person name="Yosida M."/>
            <person name="Hotuta T."/>
            <person name="Kusano J."/>
            <person name="Kanehori K."/>
            <person name="Takahashi-Fujii A."/>
            <person name="Hara H."/>
            <person name="Tanase T.-O."/>
            <person name="Nomura Y."/>
            <person name="Togiya S."/>
            <person name="Komai F."/>
            <person name="Hara R."/>
            <person name="Takeuchi K."/>
            <person name="Arita M."/>
            <person name="Imose N."/>
            <person name="Musashino K."/>
            <person name="Yuuki H."/>
            <person name="Oshima A."/>
            <person name="Sasaki N."/>
            <person name="Aotsuka S."/>
            <person name="Yoshikawa Y."/>
            <person name="Matsunawa H."/>
            <person name="Ichihara T."/>
            <person name="Shiohata N."/>
            <person name="Sano S."/>
            <person name="Moriya S."/>
            <person name="Momiyama H."/>
            <person name="Satoh N."/>
            <person name="Takami S."/>
            <person name="Terashima Y."/>
            <person name="Suzuki O."/>
            <person name="Nakagawa S."/>
            <person name="Senoh A."/>
            <person name="Mizoguchi H."/>
            <person name="Goto Y."/>
            <person name="Shimizu F."/>
            <person name="Wakebe H."/>
            <person name="Hishigaki H."/>
            <person name="Watanabe T."/>
            <person name="Sugiyama A."/>
            <person name="Takemoto M."/>
            <person name="Kawakami B."/>
            <person name="Yamazaki M."/>
            <person name="Watanabe K."/>
            <person name="Kumagai A."/>
            <person name="Itakura S."/>
            <person name="Fukuzumi Y."/>
            <person name="Fujimori Y."/>
            <person name="Komiyama M."/>
            <person name="Tashiro H."/>
            <person name="Tanigami A."/>
            <person name="Fujiwara T."/>
            <person name="Ono T."/>
            <person name="Yamada K."/>
            <person name="Fujii Y."/>
            <person name="Ozaki K."/>
            <person name="Hirao M."/>
            <person name="Ohmori Y."/>
            <person name="Kawabata A."/>
            <person name="Hikiji T."/>
            <person name="Kobatake N."/>
            <person name="Inagaki H."/>
            <person name="Ikema Y."/>
            <person name="Okamoto S."/>
            <person name="Okitani R."/>
            <person name="Kawakami T."/>
            <person name="Noguchi S."/>
            <person name="Itoh T."/>
            <person name="Shigeta K."/>
            <person name="Senba T."/>
            <person name="Matsumura K."/>
            <person name="Nakajima Y."/>
            <person name="Mizuno T."/>
            <person name="Morinaga M."/>
            <person name="Sasaki M."/>
            <person name="Togashi T."/>
            <person name="Oyama M."/>
            <person name="Hata H."/>
            <person name="Watanabe M."/>
            <person name="Komatsu T."/>
            <person name="Mizushima-Sugano J."/>
            <person name="Satoh T."/>
            <person name="Shirai Y."/>
            <person name="Takahashi Y."/>
            <person name="Nakagawa K."/>
            <person name="Okumura K."/>
            <person name="Nagase T."/>
            <person name="Nomura N."/>
            <person name="Kikuchi H."/>
            <person name="Masuho Y."/>
            <person name="Yamashita R."/>
            <person name="Nakai K."/>
            <person name="Yada T."/>
            <person name="Nakamura Y."/>
            <person name="Ohara O."/>
            <person name="Isogai T."/>
            <person name="Sugano S."/>
        </authorList>
    </citation>
    <scope>NUCLEOTIDE SEQUENCE [LARGE SCALE MRNA] (ISOFORM ARPP-19)</scope>
    <source>
        <tissue>Amygdala</tissue>
    </source>
</reference>
<reference key="6">
    <citation type="journal article" date="2007" name="BMC Genomics">
        <title>The full-ORF clone resource of the German cDNA consortium.</title>
        <authorList>
            <person name="Bechtel S."/>
            <person name="Rosenfelder H."/>
            <person name="Duda A."/>
            <person name="Schmidt C.P."/>
            <person name="Ernst U."/>
            <person name="Wellenreuther R."/>
            <person name="Mehrle A."/>
            <person name="Schuster C."/>
            <person name="Bahr A."/>
            <person name="Bloecker H."/>
            <person name="Heubner D."/>
            <person name="Hoerlein A."/>
            <person name="Michel G."/>
            <person name="Wedler H."/>
            <person name="Koehrer K."/>
            <person name="Ottenwaelder B."/>
            <person name="Poustka A."/>
            <person name="Wiemann S."/>
            <person name="Schupp I."/>
        </authorList>
    </citation>
    <scope>NUCLEOTIDE SEQUENCE [LARGE SCALE MRNA] (ISOFORM ARPP-19)</scope>
    <source>
        <tissue>Spinal cord</tissue>
    </source>
</reference>
<reference key="7">
    <citation type="journal article" date="2006" name="Nature">
        <title>Analysis of the DNA sequence and duplication history of human chromosome 15.</title>
        <authorList>
            <person name="Zody M.C."/>
            <person name="Garber M."/>
            <person name="Sharpe T."/>
            <person name="Young S.K."/>
            <person name="Rowen L."/>
            <person name="O'Neill K."/>
            <person name="Whittaker C.A."/>
            <person name="Kamal M."/>
            <person name="Chang J.L."/>
            <person name="Cuomo C.A."/>
            <person name="Dewar K."/>
            <person name="FitzGerald M.G."/>
            <person name="Kodira C.D."/>
            <person name="Madan A."/>
            <person name="Qin S."/>
            <person name="Yang X."/>
            <person name="Abbasi N."/>
            <person name="Abouelleil A."/>
            <person name="Arachchi H.M."/>
            <person name="Baradarani L."/>
            <person name="Birditt B."/>
            <person name="Bloom S."/>
            <person name="Bloom T."/>
            <person name="Borowsky M.L."/>
            <person name="Burke J."/>
            <person name="Butler J."/>
            <person name="Cook A."/>
            <person name="DeArellano K."/>
            <person name="DeCaprio D."/>
            <person name="Dorris L. III"/>
            <person name="Dors M."/>
            <person name="Eichler E.E."/>
            <person name="Engels R."/>
            <person name="Fahey J."/>
            <person name="Fleetwood P."/>
            <person name="Friedman C."/>
            <person name="Gearin G."/>
            <person name="Hall J.L."/>
            <person name="Hensley G."/>
            <person name="Johnson E."/>
            <person name="Jones C."/>
            <person name="Kamat A."/>
            <person name="Kaur A."/>
            <person name="Locke D.P."/>
            <person name="Madan A."/>
            <person name="Munson G."/>
            <person name="Jaffe D.B."/>
            <person name="Lui A."/>
            <person name="Macdonald P."/>
            <person name="Mauceli E."/>
            <person name="Naylor J.W."/>
            <person name="Nesbitt R."/>
            <person name="Nicol R."/>
            <person name="O'Leary S.B."/>
            <person name="Ratcliffe A."/>
            <person name="Rounsley S."/>
            <person name="She X."/>
            <person name="Sneddon K.M.B."/>
            <person name="Stewart S."/>
            <person name="Sougnez C."/>
            <person name="Stone S.M."/>
            <person name="Topham K."/>
            <person name="Vincent D."/>
            <person name="Wang S."/>
            <person name="Zimmer A.R."/>
            <person name="Birren B.W."/>
            <person name="Hood L."/>
            <person name="Lander E.S."/>
            <person name="Nusbaum C."/>
        </authorList>
    </citation>
    <scope>NUCLEOTIDE SEQUENCE [LARGE SCALE GENOMIC DNA]</scope>
</reference>
<reference key="8">
    <citation type="submission" date="2005-07" db="EMBL/GenBank/DDBJ databases">
        <authorList>
            <person name="Mural R.J."/>
            <person name="Istrail S."/>
            <person name="Sutton G.G."/>
            <person name="Florea L."/>
            <person name="Halpern A.L."/>
            <person name="Mobarry C.M."/>
            <person name="Lippert R."/>
            <person name="Walenz B."/>
            <person name="Shatkay H."/>
            <person name="Dew I."/>
            <person name="Miller J.R."/>
            <person name="Flanigan M.J."/>
            <person name="Edwards N.J."/>
            <person name="Bolanos R."/>
            <person name="Fasulo D."/>
            <person name="Halldorsson B.V."/>
            <person name="Hannenhalli S."/>
            <person name="Turner R."/>
            <person name="Yooseph S."/>
            <person name="Lu F."/>
            <person name="Nusskern D.R."/>
            <person name="Shue B.C."/>
            <person name="Zheng X.H."/>
            <person name="Zhong F."/>
            <person name="Delcher A.L."/>
            <person name="Huson D.H."/>
            <person name="Kravitz S.A."/>
            <person name="Mouchard L."/>
            <person name="Reinert K."/>
            <person name="Remington K.A."/>
            <person name="Clark A.G."/>
            <person name="Waterman M.S."/>
            <person name="Eichler E.E."/>
            <person name="Adams M.D."/>
            <person name="Hunkapiller M.W."/>
            <person name="Myers E.W."/>
            <person name="Venter J.C."/>
        </authorList>
    </citation>
    <scope>NUCLEOTIDE SEQUENCE [LARGE SCALE GENOMIC DNA]</scope>
</reference>
<reference key="9">
    <citation type="journal article" date="2004" name="Genome Res.">
        <title>The status, quality, and expansion of the NIH full-length cDNA project: the Mammalian Gene Collection (MGC).</title>
        <authorList>
            <consortium name="The MGC Project Team"/>
        </authorList>
    </citation>
    <scope>NUCLEOTIDE SEQUENCE [LARGE SCALE MRNA] (ISOFORM ARPP-19)</scope>
    <source>
        <tissue>Placenta</tissue>
    </source>
</reference>
<reference key="10">
    <citation type="journal article" date="2007" name="J. Biol. Chem.">
        <title>Conformation-specific binding of alpha-synuclein to novel protein partners detected by phage display and NMR spectroscopy.</title>
        <authorList>
            <person name="Woods W.S."/>
            <person name="Boettcher J.M."/>
            <person name="Zhou D.H."/>
            <person name="Kloepper K.D."/>
            <person name="Hartman K.L."/>
            <person name="Ladror D.T."/>
            <person name="Qi Z."/>
            <person name="Rienstra C.M."/>
            <person name="George J.M."/>
        </authorList>
    </citation>
    <scope>INTERACTION WITH SNCA</scope>
</reference>
<reference key="11">
    <citation type="journal article" date="2009" name="Anal. Chem.">
        <title>Lys-N and trypsin cover complementary parts of the phosphoproteome in a refined SCX-based approach.</title>
        <authorList>
            <person name="Gauci S."/>
            <person name="Helbig A.O."/>
            <person name="Slijper M."/>
            <person name="Krijgsveld J."/>
            <person name="Heck A.J."/>
            <person name="Mohammed S."/>
        </authorList>
    </citation>
    <scope>ACETYLATION [LARGE SCALE ANALYSIS] AT SER-2</scope>
    <scope>CLEAVAGE OF INITIATOR METHIONINE [LARGE SCALE ANALYSIS]</scope>
    <scope>IDENTIFICATION BY MASS SPECTROMETRY [LARGE SCALE ANALYSIS]</scope>
</reference>
<reference key="12">
    <citation type="journal article" date="2009" name="Science">
        <title>Lysine acetylation targets protein complexes and co-regulates major cellular functions.</title>
        <authorList>
            <person name="Choudhary C."/>
            <person name="Kumar C."/>
            <person name="Gnad F."/>
            <person name="Nielsen M.L."/>
            <person name="Rehman M."/>
            <person name="Walther T.C."/>
            <person name="Olsen J.V."/>
            <person name="Mann M."/>
        </authorList>
    </citation>
    <scope>ACETYLATION [LARGE SCALE ANALYSIS] AT LYS-109</scope>
    <scope>IDENTIFICATION BY MASS SPECTROMETRY [LARGE SCALE ANALYSIS]</scope>
</reference>
<reference key="13">
    <citation type="journal article" date="2010" name="Leuk. Lymphoma">
        <title>miR-451 enhances erythroid differentiation in K562 cells.</title>
        <authorList>
            <person name="Bruchova-Votavova H."/>
            <person name="Yoon D."/>
            <person name="Prchal J.T."/>
        </authorList>
    </citation>
    <scope>INDUCTION</scope>
</reference>
<reference key="14">
    <citation type="journal article" date="2010" name="Sci. Signal.">
        <title>Quantitative phosphoproteomics reveals widespread full phosphorylation site occupancy during mitosis.</title>
        <authorList>
            <person name="Olsen J.V."/>
            <person name="Vermeulen M."/>
            <person name="Santamaria A."/>
            <person name="Kumar C."/>
            <person name="Miller M.L."/>
            <person name="Jensen L.J."/>
            <person name="Gnad F."/>
            <person name="Cox J."/>
            <person name="Jensen T.S."/>
            <person name="Nigg E.A."/>
            <person name="Brunak S."/>
            <person name="Mann M."/>
        </authorList>
    </citation>
    <scope>IDENTIFICATION BY MASS SPECTROMETRY [LARGE SCALE ANALYSIS]</scope>
    <source>
        <tissue>Cervix carcinoma</tissue>
    </source>
</reference>
<reference key="15">
    <citation type="journal article" date="2010" name="Science">
        <title>The substrate of Greatwall kinase, Arpp19, controls mitosis by inhibiting protein phosphatase 2A.</title>
        <authorList>
            <person name="Gharbi-Ayachi A."/>
            <person name="Labbe J.C."/>
            <person name="Burgess A."/>
            <person name="Vigneron S."/>
            <person name="Strub J.M."/>
            <person name="Brioudes E."/>
            <person name="Van-Dorsselaer A."/>
            <person name="Castro A."/>
            <person name="Lorca T."/>
        </authorList>
    </citation>
    <scope>FUNCTION</scope>
</reference>
<reference key="16">
    <citation type="journal article" date="2011" name="BMC Syst. Biol.">
        <title>Initial characterization of the human central proteome.</title>
        <authorList>
            <person name="Burkard T.R."/>
            <person name="Planyavsky M."/>
            <person name="Kaupe I."/>
            <person name="Breitwieser F.P."/>
            <person name="Buerckstuemmer T."/>
            <person name="Bennett K.L."/>
            <person name="Superti-Furga G."/>
            <person name="Colinge J."/>
        </authorList>
    </citation>
    <scope>IDENTIFICATION BY MASS SPECTROMETRY [LARGE SCALE ANALYSIS]</scope>
</reference>
<reference key="17">
    <citation type="journal article" date="2013" name="J. Proteome Res.">
        <title>Toward a comprehensive characterization of a human cancer cell phosphoproteome.</title>
        <authorList>
            <person name="Zhou H."/>
            <person name="Di Palma S."/>
            <person name="Preisinger C."/>
            <person name="Peng M."/>
            <person name="Polat A.N."/>
            <person name="Heck A.J."/>
            <person name="Mohammed S."/>
        </authorList>
    </citation>
    <scope>PHOSPHORYLATION [LARGE SCALE ANALYSIS] AT SER-2; SER-23 AND SER-104</scope>
    <scope>IDENTIFICATION BY MASS SPECTROMETRY [LARGE SCALE ANALYSIS]</scope>
    <source>
        <tissue>Cervix carcinoma</tissue>
        <tissue>Erythroleukemia</tissue>
    </source>
</reference>
<reference evidence="13" key="18">
    <citation type="journal article" date="2024" name="Nature">
        <title>Cryo-EM structures of PP2A:B55-FAM122A and PP2A:B55-ARPP19.</title>
        <authorList>
            <person name="Padi S.K.R."/>
            <person name="Vos M.R."/>
            <person name="Godek R.J."/>
            <person name="Fuller J.R."/>
            <person name="Kruse T."/>
            <person name="Hein J.B."/>
            <person name="Nilsson J."/>
            <person name="Kelker M.S."/>
            <person name="Page R."/>
            <person name="Peti W."/>
        </authorList>
    </citation>
    <scope>STRUCTURE BY ELECTRON MICROSCOPY (2.77 ANGSTROMS) OF MUTANT ALA-104 IN COMPLEX WITH PPP2CA; PPP2R1A AND PPP2R2A</scope>
    <scope>FUNCTION</scope>
    <scope>INTERACTION WITH PPP2R2A</scope>
    <scope>PHOSPHORYLATION AT SER-62 AND SER-104 BY MASTL/GWL</scope>
</reference>
<dbReference type="EMBL" id="AJ223091">
    <property type="protein sequence ID" value="CAA11115.1"/>
    <property type="molecule type" value="mRNA"/>
</dbReference>
<dbReference type="EMBL" id="AF084555">
    <property type="protein sequence ID" value="AAD52044.1"/>
    <property type="molecule type" value="mRNA"/>
</dbReference>
<dbReference type="EMBL" id="CR457132">
    <property type="protein sequence ID" value="CAG33413.1"/>
    <property type="molecule type" value="mRNA"/>
</dbReference>
<dbReference type="EMBL" id="AL833077">
    <property type="protein sequence ID" value="CAD89929.1"/>
    <property type="molecule type" value="mRNA"/>
</dbReference>
<dbReference type="EMBL" id="AK311751">
    <property type="protein sequence ID" value="BAG34694.1"/>
    <property type="molecule type" value="mRNA"/>
</dbReference>
<dbReference type="EMBL" id="AC025917">
    <property type="status" value="NOT_ANNOTATED_CDS"/>
    <property type="molecule type" value="Genomic_DNA"/>
</dbReference>
<dbReference type="EMBL" id="CH471082">
    <property type="protein sequence ID" value="EAW77454.1"/>
    <property type="molecule type" value="Genomic_DNA"/>
</dbReference>
<dbReference type="EMBL" id="BC003418">
    <property type="protein sequence ID" value="AAH03418.1"/>
    <property type="molecule type" value="mRNA"/>
</dbReference>
<dbReference type="EMBL" id="BC100015">
    <property type="protein sequence ID" value="AAI00016.1"/>
    <property type="molecule type" value="mRNA"/>
</dbReference>
<dbReference type="CCDS" id="CCDS32242.1">
    <molecule id="P56211-1"/>
</dbReference>
<dbReference type="CCDS" id="CCDS81883.1">
    <molecule id="P56211-2"/>
</dbReference>
<dbReference type="RefSeq" id="NP_001293120.1">
    <property type="nucleotide sequence ID" value="NM_001306191.1"/>
</dbReference>
<dbReference type="RefSeq" id="NP_001293124.1">
    <molecule id="P56211-1"/>
    <property type="nucleotide sequence ID" value="NM_001306195.1"/>
</dbReference>
<dbReference type="RefSeq" id="NP_001293125.1">
    <property type="nucleotide sequence ID" value="NM_001306196.1"/>
</dbReference>
<dbReference type="RefSeq" id="NP_001317238.1">
    <molecule id="P56211-2"/>
    <property type="nucleotide sequence ID" value="NM_001330309.2"/>
</dbReference>
<dbReference type="RefSeq" id="NP_006619.1">
    <molecule id="P56211-1"/>
    <property type="nucleotide sequence ID" value="NM_006628.6"/>
</dbReference>
<dbReference type="RefSeq" id="XP_016877357.1">
    <property type="nucleotide sequence ID" value="XM_017021868.1"/>
</dbReference>
<dbReference type="RefSeq" id="XP_016877359.1">
    <molecule id="P56211-2"/>
    <property type="nucleotide sequence ID" value="XM_017021870.3"/>
</dbReference>
<dbReference type="RefSeq" id="XP_047288068.1">
    <molecule id="P56211-1"/>
    <property type="nucleotide sequence ID" value="XM_047432112.1"/>
</dbReference>
<dbReference type="RefSeq" id="XP_054233188.1">
    <molecule id="P56211-1"/>
    <property type="nucleotide sequence ID" value="XM_054377213.1"/>
</dbReference>
<dbReference type="RefSeq" id="XP_054233190.1">
    <molecule id="P56211-2"/>
    <property type="nucleotide sequence ID" value="XM_054377215.1"/>
</dbReference>
<dbReference type="PDB" id="8TTB">
    <property type="method" value="EM"/>
    <property type="resolution" value="2.77 A"/>
    <property type="chains" value="D=1-112"/>
</dbReference>
<dbReference type="PDBsum" id="8TTB"/>
<dbReference type="BMRB" id="P56211"/>
<dbReference type="EMDB" id="EMD-41604"/>
<dbReference type="SMR" id="P56211"/>
<dbReference type="BioGRID" id="115994">
    <property type="interactions" value="27"/>
</dbReference>
<dbReference type="FunCoup" id="P56211">
    <property type="interactions" value="3162"/>
</dbReference>
<dbReference type="IntAct" id="P56211">
    <property type="interactions" value="5"/>
</dbReference>
<dbReference type="STRING" id="9606.ENSP00000454341"/>
<dbReference type="iPTMnet" id="P56211"/>
<dbReference type="PhosphoSitePlus" id="P56211"/>
<dbReference type="BioMuta" id="ARPP19"/>
<dbReference type="jPOST" id="P56211"/>
<dbReference type="MassIVE" id="P56211"/>
<dbReference type="PaxDb" id="9606-ENSP00000455625"/>
<dbReference type="PeptideAtlas" id="P56211"/>
<dbReference type="ProteomicsDB" id="56905">
    <molecule id="P56211-1"/>
</dbReference>
<dbReference type="ProteomicsDB" id="56906">
    <molecule id="P56211-2"/>
</dbReference>
<dbReference type="Pumba" id="P56211"/>
<dbReference type="TopDownProteomics" id="P56211-1">
    <molecule id="P56211-1"/>
</dbReference>
<dbReference type="Antibodypedia" id="42667">
    <property type="antibodies" value="51 antibodies from 18 providers"/>
</dbReference>
<dbReference type="DNASU" id="10776"/>
<dbReference type="Ensembl" id="ENST00000249822.9">
    <molecule id="P56211-1"/>
    <property type="protein sequence ID" value="ENSP00000249822.4"/>
    <property type="gene ID" value="ENSG00000128989.11"/>
</dbReference>
<dbReference type="Ensembl" id="ENST00000561650.5">
    <molecule id="P56211-2"/>
    <property type="protein sequence ID" value="ENSP00000454234.1"/>
    <property type="gene ID" value="ENSG00000128989.11"/>
</dbReference>
<dbReference type="Ensembl" id="ENST00000563277.5">
    <molecule id="P56211-2"/>
    <property type="protein sequence ID" value="ENSP00000455986.1"/>
    <property type="gene ID" value="ENSG00000128989.11"/>
</dbReference>
<dbReference type="Ensembl" id="ENST00000563566.5">
    <molecule id="P56211-2"/>
    <property type="protein sequence ID" value="ENSP00000457631.1"/>
    <property type="gene ID" value="ENSG00000128989.11"/>
</dbReference>
<dbReference type="Ensembl" id="ENST00000566423.5">
    <molecule id="P56211-1"/>
    <property type="protein sequence ID" value="ENSP00000455625.1"/>
    <property type="gene ID" value="ENSG00000128989.11"/>
</dbReference>
<dbReference type="Ensembl" id="ENST00000567669.5">
    <molecule id="P56211-1"/>
    <property type="protein sequence ID" value="ENSP00000455151.1"/>
    <property type="gene ID" value="ENSG00000128989.11"/>
</dbReference>
<dbReference type="Ensembl" id="ENST00000568196.1">
    <molecule id="P56211-2"/>
    <property type="protein sequence ID" value="ENSP00000457805.1"/>
    <property type="gene ID" value="ENSG00000128989.11"/>
</dbReference>
<dbReference type="Ensembl" id="ENST00000569281.6">
    <molecule id="P56211-1"/>
    <property type="protein sequence ID" value="ENSP00000454297.1"/>
    <property type="gene ID" value="ENSG00000128989.11"/>
</dbReference>
<dbReference type="GeneID" id="10776"/>
<dbReference type="KEGG" id="hsa:10776"/>
<dbReference type="MANE-Select" id="ENST00000249822.9">
    <property type="protein sequence ID" value="ENSP00000249822.4"/>
    <property type="RefSeq nucleotide sequence ID" value="NM_006628.6"/>
    <property type="RefSeq protein sequence ID" value="NP_006619.1"/>
</dbReference>
<dbReference type="UCSC" id="uc002acd.2">
    <molecule id="P56211-1"/>
    <property type="organism name" value="human"/>
</dbReference>
<dbReference type="AGR" id="HGNC:16967"/>
<dbReference type="CTD" id="10776"/>
<dbReference type="DisGeNET" id="10776"/>
<dbReference type="GeneCards" id="ARPP19"/>
<dbReference type="HGNC" id="HGNC:16967">
    <property type="gene designation" value="ARPP19"/>
</dbReference>
<dbReference type="HPA" id="ENSG00000128989">
    <property type="expression patterns" value="Tissue enhanced (brain)"/>
</dbReference>
<dbReference type="MIM" id="605487">
    <property type="type" value="gene"/>
</dbReference>
<dbReference type="neXtProt" id="NX_P56211"/>
<dbReference type="OpenTargets" id="ENSG00000128989"/>
<dbReference type="PharmGKB" id="PA165478498"/>
<dbReference type="VEuPathDB" id="HostDB:ENSG00000128989"/>
<dbReference type="eggNOG" id="KOG4076">
    <property type="taxonomic scope" value="Eukaryota"/>
</dbReference>
<dbReference type="GeneTree" id="ENSGT00940000154555"/>
<dbReference type="HOGENOM" id="CLU_125025_1_0_1"/>
<dbReference type="InParanoid" id="P56211"/>
<dbReference type="OMA" id="QMAKQKY"/>
<dbReference type="OrthoDB" id="5949865at2759"/>
<dbReference type="PAN-GO" id="P56211">
    <property type="GO annotations" value="3 GO annotations based on evolutionary models"/>
</dbReference>
<dbReference type="PhylomeDB" id="P56211"/>
<dbReference type="TreeFam" id="TF314718"/>
<dbReference type="PathwayCommons" id="P56211"/>
<dbReference type="Reactome" id="R-HSA-2465910">
    <property type="pathway name" value="MASTL Facilitates Mitotic Progression"/>
</dbReference>
<dbReference type="SignaLink" id="P56211"/>
<dbReference type="SIGNOR" id="P56211"/>
<dbReference type="BioGRID-ORCS" id="10776">
    <property type="hits" value="189 hits in 1155 CRISPR screens"/>
</dbReference>
<dbReference type="ChiTaRS" id="ARPP19">
    <property type="organism name" value="human"/>
</dbReference>
<dbReference type="GeneWiki" id="ARPP-19"/>
<dbReference type="GenomeRNAi" id="10776"/>
<dbReference type="Pharos" id="P56211">
    <property type="development level" value="Tbio"/>
</dbReference>
<dbReference type="PRO" id="PR:P56211"/>
<dbReference type="Proteomes" id="UP000005640">
    <property type="component" value="Chromosome 15"/>
</dbReference>
<dbReference type="RNAct" id="P56211">
    <property type="molecule type" value="protein"/>
</dbReference>
<dbReference type="Bgee" id="ENSG00000128989">
    <property type="expression patterns" value="Expressed in prefrontal cortex and 220 other cell types or tissues"/>
</dbReference>
<dbReference type="ExpressionAtlas" id="P56211">
    <property type="expression patterns" value="baseline and differential"/>
</dbReference>
<dbReference type="GO" id="GO:0005737">
    <property type="term" value="C:cytoplasm"/>
    <property type="evidence" value="ECO:0000318"/>
    <property type="project" value="GO_Central"/>
</dbReference>
<dbReference type="GO" id="GO:0005654">
    <property type="term" value="C:nucleoplasm"/>
    <property type="evidence" value="ECO:0000304"/>
    <property type="project" value="Reactome"/>
</dbReference>
<dbReference type="GO" id="GO:0019212">
    <property type="term" value="F:phosphatase inhibitor activity"/>
    <property type="evidence" value="ECO:0000250"/>
    <property type="project" value="UniProtKB"/>
</dbReference>
<dbReference type="GO" id="GO:0015459">
    <property type="term" value="F:potassium channel regulator activity"/>
    <property type="evidence" value="ECO:0000314"/>
    <property type="project" value="UniProtKB"/>
</dbReference>
<dbReference type="GO" id="GO:0051721">
    <property type="term" value="F:protein phosphatase 2A binding"/>
    <property type="evidence" value="ECO:0000314"/>
    <property type="project" value="DisProt"/>
</dbReference>
<dbReference type="GO" id="GO:0004864">
    <property type="term" value="F:protein phosphatase inhibitor activity"/>
    <property type="evidence" value="ECO:0000314"/>
    <property type="project" value="DisProt"/>
</dbReference>
<dbReference type="GO" id="GO:0019888">
    <property type="term" value="F:protein phosphatase regulator activity"/>
    <property type="evidence" value="ECO:0000250"/>
    <property type="project" value="UniProtKB"/>
</dbReference>
<dbReference type="GO" id="GO:0005102">
    <property type="term" value="F:signaling receptor binding"/>
    <property type="evidence" value="ECO:0000314"/>
    <property type="project" value="UniProtKB"/>
</dbReference>
<dbReference type="GO" id="GO:0051301">
    <property type="term" value="P:cell division"/>
    <property type="evidence" value="ECO:0007669"/>
    <property type="project" value="UniProtKB-KW"/>
</dbReference>
<dbReference type="GO" id="GO:0000086">
    <property type="term" value="P:G2/M transition of mitotic cell cycle"/>
    <property type="evidence" value="ECO:0000315"/>
    <property type="project" value="UniProtKB"/>
</dbReference>
<dbReference type="GO" id="GO:0000278">
    <property type="term" value="P:mitotic cell cycle"/>
    <property type="evidence" value="ECO:0000315"/>
    <property type="project" value="UniProtKB"/>
</dbReference>
<dbReference type="GO" id="GO:0046326">
    <property type="term" value="P:positive regulation of D-glucose import"/>
    <property type="evidence" value="ECO:0000303"/>
    <property type="project" value="UniProtKB"/>
</dbReference>
<dbReference type="GO" id="GO:0045722">
    <property type="term" value="P:positive regulation of gluconeogenesis"/>
    <property type="evidence" value="ECO:0000314"/>
    <property type="project" value="UniProtKB"/>
</dbReference>
<dbReference type="InterPro" id="IPR006760">
    <property type="entry name" value="Endosulphine"/>
</dbReference>
<dbReference type="PANTHER" id="PTHR10358:SF4">
    <property type="entry name" value="CAMP-REGULATED PHOSPHOPROTEIN 19"/>
    <property type="match status" value="1"/>
</dbReference>
<dbReference type="PANTHER" id="PTHR10358">
    <property type="entry name" value="ENDOSULFINE"/>
    <property type="match status" value="1"/>
</dbReference>
<dbReference type="Pfam" id="PF04667">
    <property type="entry name" value="Endosulfine"/>
    <property type="match status" value="1"/>
</dbReference>
<feature type="initiator methionine" description="Removed" evidence="14">
    <location>
        <position position="1"/>
    </location>
</feature>
<feature type="chain" id="PRO_0000008041" description="cAMP-regulated phosphoprotein 19">
    <location>
        <begin position="2"/>
        <end position="112"/>
    </location>
</feature>
<feature type="region of interest" description="Disordered" evidence="5">
    <location>
        <begin position="1"/>
        <end position="49"/>
    </location>
</feature>
<feature type="region of interest" description="Disordered" evidence="5">
    <location>
        <begin position="73"/>
        <end position="112"/>
    </location>
</feature>
<feature type="compositionally biased region" description="Low complexity" evidence="5">
    <location>
        <begin position="1"/>
        <end position="11"/>
    </location>
</feature>
<feature type="compositionally biased region" description="Basic and acidic residues" evidence="5">
    <location>
        <begin position="12"/>
        <end position="32"/>
    </location>
</feature>
<feature type="modified residue" description="N-acetylserine" evidence="14">
    <location>
        <position position="2"/>
    </location>
</feature>
<feature type="modified residue" description="Phosphoserine" evidence="16">
    <location>
        <position position="2"/>
    </location>
</feature>
<feature type="modified residue" description="Phosphoserine" evidence="16">
    <location>
        <position position="23"/>
    </location>
</feature>
<feature type="modified residue" description="Phosphoserine; by GWL" evidence="9 13">
    <location>
        <position position="62"/>
    </location>
</feature>
<feature type="modified residue" description="Phosphoserine; by GWL" evidence="9">
    <location>
        <position position="104"/>
    </location>
</feature>
<feature type="modified residue" description="Phosphoserine; by PKA" evidence="2 16">
    <location>
        <position position="104"/>
    </location>
</feature>
<feature type="modified residue" description="N6-acetyllysine" evidence="15">
    <location>
        <position position="109"/>
    </location>
</feature>
<feature type="splice variant" id="VSP_018555" description="In isoform ARPP-16." evidence="11">
    <location>
        <begin position="1"/>
        <end position="16"/>
    </location>
</feature>
<feature type="helix" evidence="17">
    <location>
        <begin position="46"/>
        <end position="53"/>
    </location>
</feature>
<feature type="helix" evidence="17">
    <location>
        <begin position="64"/>
        <end position="74"/>
    </location>
</feature>
<feature type="turn" evidence="17">
    <location>
        <begin position="95"/>
        <end position="97"/>
    </location>
</feature>
<feature type="turn" evidence="17">
    <location>
        <begin position="109"/>
        <end position="111"/>
    </location>
</feature>
<feature type="modified residue" description="N-acetylmethionine" evidence="3">
    <location sequence="P56211-2">
        <position position="1"/>
    </location>
</feature>
<proteinExistence type="evidence at protein level"/>
<sequence length="112" mass="12323">MSAEVPEAASAEEQKEMEDKVTSPEKAEEAKLKARYPHLGQKPGGSDFLRKRLQKGQKYFDSGDYNMAKAKMKNKQLPTAAPDKTEVTGDHIPTPQDLPQRKPSLVASKLAG</sequence>
<accession>P56211</accession>
<accession>B2R497</accession>
<accession>Q6IAM2</accession>
<accession>Q86TA6</accession>
<accession>Q9UD70</accession>
<keyword id="KW-0002">3D-structure</keyword>
<keyword id="KW-0007">Acetylation</keyword>
<keyword id="KW-0025">Alternative splicing</keyword>
<keyword id="KW-0131">Cell cycle</keyword>
<keyword id="KW-0132">Cell division</keyword>
<keyword id="KW-0963">Cytoplasm</keyword>
<keyword id="KW-0498">Mitosis</keyword>
<keyword id="KW-0597">Phosphoprotein</keyword>
<keyword id="KW-0650">Protein phosphatase inhibitor</keyword>
<keyword id="KW-1267">Proteomics identification</keyword>
<keyword id="KW-1185">Reference proteome</keyword>
<name>ARP19_HUMAN</name>
<comment type="function">
    <text evidence="4 8 9">Protein phosphatase inhibitor that specifically inhibits protein phosphatase 2A (PP2A) during mitosis (PubMed:38123684). Inhibition of PP2A is enhanced when ARPP19 is phosphorylated (PubMed:38123684). When phosphorylated at Ser-62 during mitosis, specifically interacts with PPP2R2D (PR55-delta) and inhibits its activity, leading to inactivation of PP2A, an essential condition to keep cyclin-B1-CDK1 activity high during M phase (PubMed:21164014). May indirectly enhance GAP-43 expression (By similarity).</text>
</comment>
<comment type="subunit">
    <text evidence="1 6 9">Interacts (when phosphorylated at Ser-62) with PPP2R2D (By similarity). Interacts with SNCA (PubMed:17893145). Interacts with PPP2R2A; the interaction is direct and this interaction inhibits PP2A activity (PubMed:38123684).</text>
</comment>
<comment type="interaction">
    <interactant intactId="EBI-5773880">
        <id>P56211</id>
    </interactant>
    <interactant intactId="EBI-77613">
        <id>P05067</id>
        <label>APP</label>
    </interactant>
    <organismsDiffer>false</organismsDiffer>
    <experiments>3</experiments>
</comment>
<comment type="interaction">
    <interactant intactId="EBI-5773880">
        <id>P56211</id>
    </interactant>
    <interactant intactId="EBI-12162209">
        <id>Q5MJ68</id>
        <label>SPDYC</label>
    </interactant>
    <organismsDiffer>false</organismsDiffer>
    <experiments>3</experiments>
</comment>
<comment type="subcellular location">
    <subcellularLocation>
        <location evidence="1">Cytoplasm</location>
    </subcellularLocation>
</comment>
<comment type="alternative products">
    <event type="alternative splicing"/>
    <isoform>
        <id>P56211-1</id>
        <name>ARPP-19</name>
        <sequence type="displayed"/>
    </isoform>
    <isoform>
        <id>P56211-2</id>
        <name>ARPP-16</name>
        <sequence type="described" ref="VSP_018555"/>
    </isoform>
</comment>
<comment type="induction">
    <text evidence="7">Expression may be regulated by miR-451.</text>
</comment>
<comment type="PTM">
    <text evidence="1">Phosphorylation at Ser-62 by MASTL/GWL during mitosis is essential for interaction with PPP2R2D (PR55-delta) and subsequent inactivation of PP2A (By similarity). Phosphorylated by PKA.</text>
</comment>
<comment type="similarity">
    <text evidence="12">Belongs to the endosulfine family.</text>
</comment>
<organism>
    <name type="scientific">Homo sapiens</name>
    <name type="common">Human</name>
    <dbReference type="NCBI Taxonomy" id="9606"/>
    <lineage>
        <taxon>Eukaryota</taxon>
        <taxon>Metazoa</taxon>
        <taxon>Chordata</taxon>
        <taxon>Craniata</taxon>
        <taxon>Vertebrata</taxon>
        <taxon>Euteleostomi</taxon>
        <taxon>Mammalia</taxon>
        <taxon>Eutheria</taxon>
        <taxon>Euarchontoglires</taxon>
        <taxon>Primates</taxon>
        <taxon>Haplorrhini</taxon>
        <taxon>Catarrhini</taxon>
        <taxon>Hominidae</taxon>
        <taxon>Homo</taxon>
    </lineage>
</organism>
<evidence type="ECO:0000250" key="1"/>
<evidence type="ECO:0000250" key="2">
    <source>
        <dbReference type="UniProtKB" id="P56212"/>
    </source>
</evidence>
<evidence type="ECO:0000250" key="3">
    <source>
        <dbReference type="UniProtKB" id="Q28055"/>
    </source>
</evidence>
<evidence type="ECO:0000250" key="4">
    <source>
        <dbReference type="UniProtKB" id="Q712U5"/>
    </source>
</evidence>
<evidence type="ECO:0000256" key="5">
    <source>
        <dbReference type="SAM" id="MobiDB-lite"/>
    </source>
</evidence>
<evidence type="ECO:0000269" key="6">
    <source>
    </source>
</evidence>
<evidence type="ECO:0000269" key="7">
    <source>
    </source>
</evidence>
<evidence type="ECO:0000269" key="8">
    <source>
    </source>
</evidence>
<evidence type="ECO:0000269" key="9">
    <source>
    </source>
</evidence>
<evidence type="ECO:0000303" key="10">
    <source>
    </source>
</evidence>
<evidence type="ECO:0000303" key="11">
    <source>
    </source>
</evidence>
<evidence type="ECO:0000305" key="12"/>
<evidence type="ECO:0007744" key="13">
    <source>
        <dbReference type="PDB" id="8TTB"/>
    </source>
</evidence>
<evidence type="ECO:0007744" key="14">
    <source>
    </source>
</evidence>
<evidence type="ECO:0007744" key="15">
    <source>
    </source>
</evidence>
<evidence type="ECO:0007744" key="16">
    <source>
    </source>
</evidence>
<evidence type="ECO:0007829" key="17">
    <source>
        <dbReference type="PDB" id="8TTB"/>
    </source>
</evidence>
<protein>
    <recommendedName>
        <fullName evidence="10">cAMP-regulated phosphoprotein 19</fullName>
        <shortName>ARPP-19</shortName>
    </recommendedName>
</protein>
<gene>
    <name type="primary">ARPP19</name>
</gene>